<organism>
    <name type="scientific">Methylobacterium radiotolerans (strain ATCC 27329 / DSM 1819 / JCM 2831 / NBRC 15690 / NCIMB 10815 / 0-1)</name>
    <dbReference type="NCBI Taxonomy" id="426355"/>
    <lineage>
        <taxon>Bacteria</taxon>
        <taxon>Pseudomonadati</taxon>
        <taxon>Pseudomonadota</taxon>
        <taxon>Alphaproteobacteria</taxon>
        <taxon>Hyphomicrobiales</taxon>
        <taxon>Methylobacteriaceae</taxon>
        <taxon>Methylobacterium</taxon>
    </lineage>
</organism>
<evidence type="ECO:0000255" key="1">
    <source>
        <dbReference type="HAMAP-Rule" id="MF_00366"/>
    </source>
</evidence>
<evidence type="ECO:0000256" key="2">
    <source>
        <dbReference type="SAM" id="MobiDB-lite"/>
    </source>
</evidence>
<sequence length="136" mass="14883">MARVTVEDCIEKVENRFELVLLASHRARLLAAGAPLTIDRDRDKNPVVALREIGDETITADDLKEQLIHSMQKYVEVDEPEAETVPLLSSSPAAAAVAPQSSSDDAAVQFDRMSEEDLLRGLENLAPPVETDDEGE</sequence>
<dbReference type="EC" id="2.7.7.6" evidence="1"/>
<dbReference type="EMBL" id="CP001001">
    <property type="protein sequence ID" value="ACB23890.1"/>
    <property type="molecule type" value="Genomic_DNA"/>
</dbReference>
<dbReference type="RefSeq" id="WP_010685409.1">
    <property type="nucleotide sequence ID" value="NC_010505.1"/>
</dbReference>
<dbReference type="SMR" id="B1LTE4"/>
<dbReference type="STRING" id="426355.Mrad2831_1895"/>
<dbReference type="GeneID" id="96604604"/>
<dbReference type="KEGG" id="mrd:Mrad2831_1895"/>
<dbReference type="eggNOG" id="COG1758">
    <property type="taxonomic scope" value="Bacteria"/>
</dbReference>
<dbReference type="HOGENOM" id="CLU_125406_2_0_5"/>
<dbReference type="OrthoDB" id="9796300at2"/>
<dbReference type="Proteomes" id="UP000006589">
    <property type="component" value="Chromosome"/>
</dbReference>
<dbReference type="GO" id="GO:0000428">
    <property type="term" value="C:DNA-directed RNA polymerase complex"/>
    <property type="evidence" value="ECO:0007669"/>
    <property type="project" value="UniProtKB-KW"/>
</dbReference>
<dbReference type="GO" id="GO:0003677">
    <property type="term" value="F:DNA binding"/>
    <property type="evidence" value="ECO:0007669"/>
    <property type="project" value="UniProtKB-UniRule"/>
</dbReference>
<dbReference type="GO" id="GO:0003899">
    <property type="term" value="F:DNA-directed RNA polymerase activity"/>
    <property type="evidence" value="ECO:0007669"/>
    <property type="project" value="UniProtKB-UniRule"/>
</dbReference>
<dbReference type="GO" id="GO:0006351">
    <property type="term" value="P:DNA-templated transcription"/>
    <property type="evidence" value="ECO:0007669"/>
    <property type="project" value="UniProtKB-UniRule"/>
</dbReference>
<dbReference type="Gene3D" id="3.90.940.10">
    <property type="match status" value="1"/>
</dbReference>
<dbReference type="HAMAP" id="MF_00366">
    <property type="entry name" value="RNApol_bact_RpoZ"/>
    <property type="match status" value="1"/>
</dbReference>
<dbReference type="InterPro" id="IPR003716">
    <property type="entry name" value="DNA-dir_RNA_pol_omega"/>
</dbReference>
<dbReference type="InterPro" id="IPR006110">
    <property type="entry name" value="Pol_omega/Rpo6/RPB6"/>
</dbReference>
<dbReference type="InterPro" id="IPR036161">
    <property type="entry name" value="RPB6/omega-like_sf"/>
</dbReference>
<dbReference type="NCBIfam" id="TIGR00690">
    <property type="entry name" value="rpoZ"/>
    <property type="match status" value="1"/>
</dbReference>
<dbReference type="PANTHER" id="PTHR34476">
    <property type="entry name" value="DNA-DIRECTED RNA POLYMERASE SUBUNIT OMEGA"/>
    <property type="match status" value="1"/>
</dbReference>
<dbReference type="PANTHER" id="PTHR34476:SF1">
    <property type="entry name" value="DNA-DIRECTED RNA POLYMERASE SUBUNIT OMEGA"/>
    <property type="match status" value="1"/>
</dbReference>
<dbReference type="Pfam" id="PF01192">
    <property type="entry name" value="RNA_pol_Rpb6"/>
    <property type="match status" value="1"/>
</dbReference>
<dbReference type="SMART" id="SM01409">
    <property type="entry name" value="RNA_pol_Rpb6"/>
    <property type="match status" value="1"/>
</dbReference>
<dbReference type="SUPFAM" id="SSF63562">
    <property type="entry name" value="RPB6/omega subunit-like"/>
    <property type="match status" value="1"/>
</dbReference>
<accession>B1LTE4</accession>
<keyword id="KW-0240">DNA-directed RNA polymerase</keyword>
<keyword id="KW-0548">Nucleotidyltransferase</keyword>
<keyword id="KW-0804">Transcription</keyword>
<keyword id="KW-0808">Transferase</keyword>
<proteinExistence type="inferred from homology"/>
<protein>
    <recommendedName>
        <fullName evidence="1">DNA-directed RNA polymerase subunit omega</fullName>
        <shortName evidence="1">RNAP omega subunit</shortName>
        <ecNumber evidence="1">2.7.7.6</ecNumber>
    </recommendedName>
    <alternativeName>
        <fullName evidence="1">RNA polymerase omega subunit</fullName>
    </alternativeName>
    <alternativeName>
        <fullName evidence="1">Transcriptase subunit omega</fullName>
    </alternativeName>
</protein>
<comment type="function">
    <text evidence="1">Promotes RNA polymerase assembly. Latches the N- and C-terminal regions of the beta' subunit thereby facilitating its interaction with the beta and alpha subunits.</text>
</comment>
<comment type="catalytic activity">
    <reaction evidence="1">
        <text>RNA(n) + a ribonucleoside 5'-triphosphate = RNA(n+1) + diphosphate</text>
        <dbReference type="Rhea" id="RHEA:21248"/>
        <dbReference type="Rhea" id="RHEA-COMP:14527"/>
        <dbReference type="Rhea" id="RHEA-COMP:17342"/>
        <dbReference type="ChEBI" id="CHEBI:33019"/>
        <dbReference type="ChEBI" id="CHEBI:61557"/>
        <dbReference type="ChEBI" id="CHEBI:140395"/>
        <dbReference type="EC" id="2.7.7.6"/>
    </reaction>
</comment>
<comment type="subunit">
    <text evidence="1">The RNAP catalytic core consists of 2 alpha, 1 beta, 1 beta' and 1 omega subunit. When a sigma factor is associated with the core the holoenzyme is formed, which can initiate transcription.</text>
</comment>
<comment type="similarity">
    <text evidence="1">Belongs to the RNA polymerase subunit omega family.</text>
</comment>
<gene>
    <name evidence="1" type="primary">rpoZ</name>
    <name type="ordered locus">Mrad2831_1895</name>
</gene>
<feature type="chain" id="PRO_1000121246" description="DNA-directed RNA polymerase subunit omega">
    <location>
        <begin position="1"/>
        <end position="136"/>
    </location>
</feature>
<feature type="region of interest" description="Disordered" evidence="2">
    <location>
        <begin position="79"/>
        <end position="107"/>
    </location>
</feature>
<feature type="compositionally biased region" description="Low complexity" evidence="2">
    <location>
        <begin position="89"/>
        <end position="107"/>
    </location>
</feature>
<reference key="1">
    <citation type="submission" date="2008-03" db="EMBL/GenBank/DDBJ databases">
        <title>Complete sequence of chromosome of Methylobacterium radiotolerans JCM 2831.</title>
        <authorList>
            <consortium name="US DOE Joint Genome Institute"/>
            <person name="Copeland A."/>
            <person name="Lucas S."/>
            <person name="Lapidus A."/>
            <person name="Glavina del Rio T."/>
            <person name="Dalin E."/>
            <person name="Tice H."/>
            <person name="Bruce D."/>
            <person name="Goodwin L."/>
            <person name="Pitluck S."/>
            <person name="Kiss H."/>
            <person name="Brettin T."/>
            <person name="Detter J.C."/>
            <person name="Han C."/>
            <person name="Kuske C.R."/>
            <person name="Schmutz J."/>
            <person name="Larimer F."/>
            <person name="Land M."/>
            <person name="Hauser L."/>
            <person name="Kyrpides N."/>
            <person name="Mikhailova N."/>
            <person name="Marx C.J."/>
            <person name="Richardson P."/>
        </authorList>
    </citation>
    <scope>NUCLEOTIDE SEQUENCE [LARGE SCALE GENOMIC DNA]</scope>
    <source>
        <strain>ATCC 27329 / DSM 1819 / JCM 2831 / NBRC 15690 / NCIMB 10815 / 0-1</strain>
    </source>
</reference>
<name>RPOZ_METRJ</name>